<reference key="1">
    <citation type="submission" date="2006-03" db="EMBL/GenBank/DDBJ databases">
        <title>Complete sequence of Rhodopseudomonas palustris BisB18.</title>
        <authorList>
            <consortium name="US DOE Joint Genome Institute"/>
            <person name="Copeland A."/>
            <person name="Lucas S."/>
            <person name="Lapidus A."/>
            <person name="Barry K."/>
            <person name="Detter J.C."/>
            <person name="Glavina del Rio T."/>
            <person name="Hammon N."/>
            <person name="Israni S."/>
            <person name="Dalin E."/>
            <person name="Tice H."/>
            <person name="Pitluck S."/>
            <person name="Chain P."/>
            <person name="Malfatti S."/>
            <person name="Shin M."/>
            <person name="Vergez L."/>
            <person name="Schmutz J."/>
            <person name="Larimer F."/>
            <person name="Land M."/>
            <person name="Hauser L."/>
            <person name="Pelletier D.A."/>
            <person name="Kyrpides N."/>
            <person name="Anderson I."/>
            <person name="Oda Y."/>
            <person name="Harwood C.S."/>
            <person name="Richardson P."/>
        </authorList>
    </citation>
    <scope>NUCLEOTIDE SEQUENCE [LARGE SCALE GENOMIC DNA]</scope>
    <source>
        <strain>BisB18</strain>
    </source>
</reference>
<name>PHNC1_RHOPB</name>
<proteinExistence type="inferred from homology"/>
<accession>Q20ZP0</accession>
<sequence>MLRIQALTKTYKNGEAALRGVSLSVGAGEIIGLIGPSGAGKSTLIRCVNRLIEPSSGRVQLGEVELTGLSSGALRRERRRIGMIFQEYALIERLTVMENVLAGRLGYTGFWNSWFRRFAEQDIQRAIALLERVGLIDHIDKRADALSGGQRQRVGIARALIQQPELLLVDEPTASLDPKTSRSVMRLLTELCIENRLAAIVNIHDVVLAQAFLPRIVGLNAGIVVYDGPASGLTAEVLTSIYGEEDWTRTAAGDGGTDDGEPLIIARMEAAQ</sequence>
<keyword id="KW-0067">ATP-binding</keyword>
<keyword id="KW-0997">Cell inner membrane</keyword>
<keyword id="KW-1003">Cell membrane</keyword>
<keyword id="KW-0472">Membrane</keyword>
<keyword id="KW-0547">Nucleotide-binding</keyword>
<keyword id="KW-0918">Phosphonate transport</keyword>
<keyword id="KW-1278">Translocase</keyword>
<keyword id="KW-0813">Transport</keyword>
<dbReference type="EC" id="7.3.2.2" evidence="1"/>
<dbReference type="EMBL" id="CP000301">
    <property type="protein sequence ID" value="ABD89396.1"/>
    <property type="molecule type" value="Genomic_DNA"/>
</dbReference>
<dbReference type="SMR" id="Q20ZP0"/>
<dbReference type="STRING" id="316056.RPC_3865"/>
<dbReference type="KEGG" id="rpc:RPC_3865"/>
<dbReference type="eggNOG" id="COG3638">
    <property type="taxonomic scope" value="Bacteria"/>
</dbReference>
<dbReference type="HOGENOM" id="CLU_000604_1_22_5"/>
<dbReference type="OrthoDB" id="9802264at2"/>
<dbReference type="GO" id="GO:0005886">
    <property type="term" value="C:plasma membrane"/>
    <property type="evidence" value="ECO:0007669"/>
    <property type="project" value="UniProtKB-SubCell"/>
</dbReference>
<dbReference type="GO" id="GO:0015416">
    <property type="term" value="F:ABC-type phosphonate transporter activity"/>
    <property type="evidence" value="ECO:0007669"/>
    <property type="project" value="UniProtKB-EC"/>
</dbReference>
<dbReference type="GO" id="GO:0005524">
    <property type="term" value="F:ATP binding"/>
    <property type="evidence" value="ECO:0007669"/>
    <property type="project" value="UniProtKB-KW"/>
</dbReference>
<dbReference type="GO" id="GO:0016887">
    <property type="term" value="F:ATP hydrolysis activity"/>
    <property type="evidence" value="ECO:0007669"/>
    <property type="project" value="InterPro"/>
</dbReference>
<dbReference type="CDD" id="cd03256">
    <property type="entry name" value="ABC_PhnC_transporter"/>
    <property type="match status" value="1"/>
</dbReference>
<dbReference type="Gene3D" id="3.40.50.300">
    <property type="entry name" value="P-loop containing nucleotide triphosphate hydrolases"/>
    <property type="match status" value="1"/>
</dbReference>
<dbReference type="InterPro" id="IPR003593">
    <property type="entry name" value="AAA+_ATPase"/>
</dbReference>
<dbReference type="InterPro" id="IPR003439">
    <property type="entry name" value="ABC_transporter-like_ATP-bd"/>
</dbReference>
<dbReference type="InterPro" id="IPR017871">
    <property type="entry name" value="ABC_transporter-like_CS"/>
</dbReference>
<dbReference type="InterPro" id="IPR012693">
    <property type="entry name" value="ABC_transpr_PhnC"/>
</dbReference>
<dbReference type="InterPro" id="IPR050086">
    <property type="entry name" value="MetN_ABC_transporter-like"/>
</dbReference>
<dbReference type="InterPro" id="IPR027417">
    <property type="entry name" value="P-loop_NTPase"/>
</dbReference>
<dbReference type="NCBIfam" id="TIGR02315">
    <property type="entry name" value="ABC_phnC"/>
    <property type="match status" value="1"/>
</dbReference>
<dbReference type="PANTHER" id="PTHR43166">
    <property type="entry name" value="AMINO ACID IMPORT ATP-BINDING PROTEIN"/>
    <property type="match status" value="1"/>
</dbReference>
<dbReference type="PANTHER" id="PTHR43166:SF6">
    <property type="entry name" value="PHOSPHONATES IMPORT ATP-BINDING PROTEIN PHNC"/>
    <property type="match status" value="1"/>
</dbReference>
<dbReference type="Pfam" id="PF00005">
    <property type="entry name" value="ABC_tran"/>
    <property type="match status" value="1"/>
</dbReference>
<dbReference type="SMART" id="SM00382">
    <property type="entry name" value="AAA"/>
    <property type="match status" value="1"/>
</dbReference>
<dbReference type="SUPFAM" id="SSF52540">
    <property type="entry name" value="P-loop containing nucleoside triphosphate hydrolases"/>
    <property type="match status" value="1"/>
</dbReference>
<dbReference type="PROSITE" id="PS00211">
    <property type="entry name" value="ABC_TRANSPORTER_1"/>
    <property type="match status" value="1"/>
</dbReference>
<dbReference type="PROSITE" id="PS50893">
    <property type="entry name" value="ABC_TRANSPORTER_2"/>
    <property type="match status" value="1"/>
</dbReference>
<dbReference type="PROSITE" id="PS51249">
    <property type="entry name" value="PHNC"/>
    <property type="match status" value="1"/>
</dbReference>
<feature type="chain" id="PRO_0000274743" description="Phosphonates import ATP-binding protein PhnC 1">
    <location>
        <begin position="1"/>
        <end position="272"/>
    </location>
</feature>
<feature type="domain" description="ABC transporter" evidence="1">
    <location>
        <begin position="2"/>
        <end position="246"/>
    </location>
</feature>
<feature type="binding site" evidence="1">
    <location>
        <begin position="35"/>
        <end position="42"/>
    </location>
    <ligand>
        <name>ATP</name>
        <dbReference type="ChEBI" id="CHEBI:30616"/>
    </ligand>
</feature>
<organism>
    <name type="scientific">Rhodopseudomonas palustris (strain BisB18)</name>
    <dbReference type="NCBI Taxonomy" id="316056"/>
    <lineage>
        <taxon>Bacteria</taxon>
        <taxon>Pseudomonadati</taxon>
        <taxon>Pseudomonadota</taxon>
        <taxon>Alphaproteobacteria</taxon>
        <taxon>Hyphomicrobiales</taxon>
        <taxon>Nitrobacteraceae</taxon>
        <taxon>Rhodopseudomonas</taxon>
    </lineage>
</organism>
<comment type="function">
    <text evidence="1">Part of the ABC transporter complex PhnCDE involved in phosphonates import. Responsible for energy coupling to the transport system.</text>
</comment>
<comment type="catalytic activity">
    <reaction evidence="1">
        <text>phosphonate(out) + ATP + H2O = phosphonate(in) + ADP + phosphate + H(+)</text>
        <dbReference type="Rhea" id="RHEA:18065"/>
        <dbReference type="ChEBI" id="CHEBI:15377"/>
        <dbReference type="ChEBI" id="CHEBI:15378"/>
        <dbReference type="ChEBI" id="CHEBI:16215"/>
        <dbReference type="ChEBI" id="CHEBI:30616"/>
        <dbReference type="ChEBI" id="CHEBI:43474"/>
        <dbReference type="ChEBI" id="CHEBI:456216"/>
        <dbReference type="EC" id="7.3.2.2"/>
    </reaction>
</comment>
<comment type="subunit">
    <text evidence="1">The complex is composed of two ATP-binding proteins (PhnC), two transmembrane proteins (PhnE) and a solute-binding protein (PhnD).</text>
</comment>
<comment type="subcellular location">
    <subcellularLocation>
        <location evidence="1">Cell inner membrane</location>
        <topology evidence="1">Peripheral membrane protein</topology>
    </subcellularLocation>
</comment>
<comment type="similarity">
    <text evidence="1">Belongs to the ABC transporter superfamily. Phosphonates importer (TC 3.A.1.9.1) family.</text>
</comment>
<gene>
    <name evidence="1" type="primary">phnC1</name>
    <name type="ordered locus">RPC_3865</name>
</gene>
<protein>
    <recommendedName>
        <fullName evidence="1">Phosphonates import ATP-binding protein PhnC 1</fullName>
        <ecNumber evidence="1">7.3.2.2</ecNumber>
    </recommendedName>
</protein>
<evidence type="ECO:0000255" key="1">
    <source>
        <dbReference type="HAMAP-Rule" id="MF_01713"/>
    </source>
</evidence>